<evidence type="ECO:0000250" key="1">
    <source>
        <dbReference type="UniProtKB" id="P0CK64"/>
    </source>
</evidence>
<evidence type="ECO:0000250" key="2">
    <source>
        <dbReference type="UniProtKB" id="P0CK68"/>
    </source>
</evidence>
<evidence type="ECO:0000250" key="3">
    <source>
        <dbReference type="UniProtKB" id="P0DJW8"/>
    </source>
</evidence>
<evidence type="ECO:0000250" key="4">
    <source>
        <dbReference type="UniProtKB" id="P0DXO5"/>
    </source>
</evidence>
<evidence type="ECO:0000250" key="5">
    <source>
        <dbReference type="UniProtKB" id="P0DXO6"/>
    </source>
</evidence>
<evidence type="ECO:0000305" key="6"/>
<gene>
    <name type="primary">PA</name>
</gene>
<reference key="1">
    <citation type="submission" date="2000-01" db="EMBL/GenBank/DDBJ databases">
        <authorList>
            <person name="Seong B."/>
            <person name="Lee K."/>
        </authorList>
    </citation>
    <scope>NUCLEOTIDE SEQUENCE [GENOMIC RNA]</scope>
</reference>
<dbReference type="EMBL" id="AB036780">
    <property type="status" value="NOT_ANNOTATED_CDS"/>
    <property type="molecule type" value="Genomic_RNA"/>
</dbReference>
<dbReference type="SMR" id="P0DJW9"/>
<dbReference type="GO" id="GO:0003723">
    <property type="term" value="F:RNA binding"/>
    <property type="evidence" value="ECO:0007669"/>
    <property type="project" value="InterPro"/>
</dbReference>
<dbReference type="GO" id="GO:0039694">
    <property type="term" value="P:viral RNA genome replication"/>
    <property type="evidence" value="ECO:0007669"/>
    <property type="project" value="InterPro"/>
</dbReference>
<dbReference type="GO" id="GO:0075523">
    <property type="term" value="P:viral translational frameshifting"/>
    <property type="evidence" value="ECO:0007669"/>
    <property type="project" value="UniProtKB-KW"/>
</dbReference>
<dbReference type="FunFam" id="3.40.91.90:FF:000001">
    <property type="entry name" value="Polymerase acidic protein"/>
    <property type="match status" value="1"/>
</dbReference>
<dbReference type="Gene3D" id="3.40.91.90">
    <property type="entry name" value="Influenza RNA-dependent RNA polymerase subunit PA, endonuclease domain"/>
    <property type="match status" value="1"/>
</dbReference>
<dbReference type="InterPro" id="IPR001009">
    <property type="entry name" value="PA/PA-X"/>
</dbReference>
<dbReference type="InterPro" id="IPR038372">
    <property type="entry name" value="PA/PA-X_sf"/>
</dbReference>
<dbReference type="Pfam" id="PF00603">
    <property type="entry name" value="Flu_PA"/>
    <property type="match status" value="1"/>
</dbReference>
<comment type="function">
    <text evidence="1 4">Plays a major role in the shutoff of the host protein expression by cleaving mRNAs probably via an endonuclease activity. This host shutoff allows the virus to escape from the host antiviral response (By similarity). Hijacks host RNA splicing machinery to selectively target host RNAs containing introns for destruction. This may explain the preferential degradation of RNAs that have undergone co- or post-transcriptional processing (By similarity).</text>
</comment>
<comment type="subcellular location">
    <subcellularLocation>
        <location evidence="4">Host cytoplasm</location>
    </subcellularLocation>
    <subcellularLocation>
        <location evidence="4">Host nucleus</location>
    </subcellularLocation>
</comment>
<comment type="alternative products">
    <event type="ribosomal frameshifting"/>
    <isoform>
        <id>P0DJW9-1</id>
        <name>PA-X</name>
        <sequence type="displayed"/>
    </isoform>
    <isoform>
        <id>Q9IQ47-1</id>
        <name>PA</name>
        <sequence type="external"/>
    </isoform>
</comment>
<comment type="domain">
    <text evidence="1 4">The probable endonuclease active site in the N-terminus and the basic amino acid cluster in the C-terminus are important for the shutoff activity. The C-terminus acts as a nuclear localization signal (By similarity). The C-terminus is recruited to host protein complexes involved in nuclear Pol II RNA processing (By similarity).</text>
</comment>
<comment type="similarity">
    <text evidence="6">Belongs to the influenza viruses PA-X family.</text>
</comment>
<name>PAX_I000X</name>
<keyword id="KW-1132">Decay of host mRNAs by virus</keyword>
<keyword id="KW-1262">Eukaryotic host gene expression shutoff by virus</keyword>
<keyword id="KW-1035">Host cytoplasm</keyword>
<keyword id="KW-1190">Host gene expression shutoff by virus</keyword>
<keyword id="KW-1192">Host mRNA suppression by virus</keyword>
<keyword id="KW-1048">Host nucleus</keyword>
<keyword id="KW-0945">Host-virus interaction</keyword>
<keyword id="KW-0688">Ribosomal frameshifting</keyword>
<feature type="chain" id="PRO_0000419432" description="Protein PA-X">
    <location>
        <begin position="1"/>
        <end position="252"/>
    </location>
</feature>
<feature type="active site" evidence="2">
    <location>
        <position position="80"/>
    </location>
</feature>
<feature type="active site" evidence="2">
    <location>
        <position position="108"/>
    </location>
</feature>
<feature type="site" description="Important for efficient shutoff activity" evidence="5">
    <location>
        <position position="28"/>
    </location>
</feature>
<feature type="site" description="Important for efficient shutoff activity" evidence="5">
    <location>
        <position position="65"/>
    </location>
</feature>
<feature type="site" description="Important for efficient shutoff activity and nuclear localization" evidence="4">
    <location>
        <position position="195"/>
    </location>
</feature>
<feature type="site" description="Important for efficient shutoff activity and nuclear localization" evidence="4">
    <location>
        <position position="198"/>
    </location>
</feature>
<feature type="site" description="Important for efficient shutoff activity and nuclear localization" evidence="4">
    <location>
        <position position="199"/>
    </location>
</feature>
<feature type="site" description="Important for efficient shutoff activity" evidence="3">
    <location>
        <position position="202"/>
    </location>
</feature>
<feature type="site" description="Important for efficient shutoff activity" evidence="3">
    <location>
        <position position="203"/>
    </location>
</feature>
<feature type="site" description="Important for efficient shutoff activity" evidence="3">
    <location>
        <position position="206"/>
    </location>
</feature>
<accession>P0DJW9</accession>
<protein>
    <recommendedName>
        <fullName>Protein PA-X</fullName>
    </recommendedName>
</protein>
<sequence length="252" mass="29396">MEDFVRQCFNPMIVELAEKTMKEYGEDLKIETNKFAAICTHLEVCFMYSDFHFINEQGESIIVELGDPSALLKHRFEIIEGRDRTMAWTVVNSICNTTGAEKPKFLPDLYDYKENRFIEIGVTRREVHIYYLEKANKIKSEKTHIHIFSFTGEEMATKADYTLDEESRARIKTRLFTIRQEMASRGLWDSFVSPREEKRQLKKGLKSQEQCASLPTKVSRRTSPALKILEPMWMDSNRTATLRASCLKCPKK</sequence>
<proteinExistence type="inferred from homology"/>
<organism>
    <name type="scientific">Influenza A virus (strain A/X-31 H3N2)</name>
    <dbReference type="NCBI Taxonomy" id="132504"/>
    <lineage>
        <taxon>Viruses</taxon>
        <taxon>Riboviria</taxon>
        <taxon>Orthornavirae</taxon>
        <taxon>Negarnaviricota</taxon>
        <taxon>Polyploviricotina</taxon>
        <taxon>Insthoviricetes</taxon>
        <taxon>Articulavirales</taxon>
        <taxon>Orthomyxoviridae</taxon>
        <taxon>Alphainfluenzavirus</taxon>
        <taxon>Alphainfluenzavirus influenzae</taxon>
        <taxon>Influenza A virus</taxon>
    </lineage>
</organism>
<organismHost>
    <name type="scientific">Aves</name>
    <dbReference type="NCBI Taxonomy" id="8782"/>
</organismHost>
<organismHost>
    <name type="scientific">Cetacea</name>
    <name type="common">whales</name>
    <dbReference type="NCBI Taxonomy" id="9721"/>
</organismHost>
<organismHost>
    <name type="scientific">Homo sapiens</name>
    <name type="common">Human</name>
    <dbReference type="NCBI Taxonomy" id="9606"/>
</organismHost>
<organismHost>
    <name type="scientific">Phocidae</name>
    <name type="common">true seals</name>
    <dbReference type="NCBI Taxonomy" id="9709"/>
</organismHost>
<organismHost>
    <name type="scientific">Sus scrofa</name>
    <name type="common">Pig</name>
    <dbReference type="NCBI Taxonomy" id="9823"/>
</organismHost>